<organism>
    <name type="scientific">Pseudoalteromonas translucida (strain TAC 125)</name>
    <dbReference type="NCBI Taxonomy" id="326442"/>
    <lineage>
        <taxon>Bacteria</taxon>
        <taxon>Pseudomonadati</taxon>
        <taxon>Pseudomonadota</taxon>
        <taxon>Gammaproteobacteria</taxon>
        <taxon>Alteromonadales</taxon>
        <taxon>Pseudoalteromonadaceae</taxon>
        <taxon>Pseudoalteromonas</taxon>
    </lineage>
</organism>
<proteinExistence type="inferred from homology"/>
<gene>
    <name evidence="1" type="primary">rlmG</name>
    <name type="ordered locus">PSHAa2245</name>
</gene>
<feature type="chain" id="PRO_0000366471" description="Ribosomal RNA large subunit methyltransferase G">
    <location>
        <begin position="1"/>
        <end position="382"/>
    </location>
</feature>
<accession>Q3IHQ6</accession>
<reference key="1">
    <citation type="journal article" date="2005" name="Genome Res.">
        <title>Coping with cold: the genome of the versatile marine Antarctica bacterium Pseudoalteromonas haloplanktis TAC125.</title>
        <authorList>
            <person name="Medigue C."/>
            <person name="Krin E."/>
            <person name="Pascal G."/>
            <person name="Barbe V."/>
            <person name="Bernsel A."/>
            <person name="Bertin P.N."/>
            <person name="Cheung F."/>
            <person name="Cruveiller S."/>
            <person name="D'Amico S."/>
            <person name="Duilio A."/>
            <person name="Fang G."/>
            <person name="Feller G."/>
            <person name="Ho C."/>
            <person name="Mangenot S."/>
            <person name="Marino G."/>
            <person name="Nilsson J."/>
            <person name="Parrilli E."/>
            <person name="Rocha E.P.C."/>
            <person name="Rouy Z."/>
            <person name="Sekowska A."/>
            <person name="Tutino M.L."/>
            <person name="Vallenet D."/>
            <person name="von Heijne G."/>
            <person name="Danchin A."/>
        </authorList>
    </citation>
    <scope>NUCLEOTIDE SEQUENCE [LARGE SCALE GENOMIC DNA]</scope>
    <source>
        <strain>TAC 125</strain>
    </source>
</reference>
<evidence type="ECO:0000255" key="1">
    <source>
        <dbReference type="HAMAP-Rule" id="MF_01859"/>
    </source>
</evidence>
<protein>
    <recommendedName>
        <fullName evidence="1">Ribosomal RNA large subunit methyltransferase G</fullName>
        <ecNumber evidence="1">2.1.1.174</ecNumber>
    </recommendedName>
    <alternativeName>
        <fullName evidence="1">23S rRNA m2G1835 methyltransferase</fullName>
    </alternativeName>
    <alternativeName>
        <fullName evidence="1">rRNA (guanine-N(2)-)-methyltransferase RlmG</fullName>
    </alternativeName>
</protein>
<comment type="function">
    <text evidence="1">Specifically methylates the guanine in position 1835 (m2G1835) of 23S rRNA.</text>
</comment>
<comment type="catalytic activity">
    <reaction evidence="1">
        <text>guanosine(1835) in 23S rRNA + S-adenosyl-L-methionine = N(2)-methylguanosine(1835) in 23S rRNA + S-adenosyl-L-homocysteine + H(+)</text>
        <dbReference type="Rhea" id="RHEA:42744"/>
        <dbReference type="Rhea" id="RHEA-COMP:10217"/>
        <dbReference type="Rhea" id="RHEA-COMP:10218"/>
        <dbReference type="ChEBI" id="CHEBI:15378"/>
        <dbReference type="ChEBI" id="CHEBI:57856"/>
        <dbReference type="ChEBI" id="CHEBI:59789"/>
        <dbReference type="ChEBI" id="CHEBI:74269"/>
        <dbReference type="ChEBI" id="CHEBI:74481"/>
        <dbReference type="EC" id="2.1.1.174"/>
    </reaction>
</comment>
<comment type="subcellular location">
    <subcellularLocation>
        <location evidence="1">Cytoplasm</location>
    </subcellularLocation>
</comment>
<comment type="similarity">
    <text evidence="1">Belongs to the methyltransferase superfamily. RlmG family.</text>
</comment>
<dbReference type="EC" id="2.1.1.174" evidence="1"/>
<dbReference type="EMBL" id="CR954246">
    <property type="protein sequence ID" value="CAI87301.1"/>
    <property type="molecule type" value="Genomic_DNA"/>
</dbReference>
<dbReference type="SMR" id="Q3IHQ6"/>
<dbReference type="STRING" id="326442.PSHAa2245"/>
<dbReference type="KEGG" id="pha:PSHAa2245"/>
<dbReference type="PATRIC" id="fig|326442.8.peg.2166"/>
<dbReference type="eggNOG" id="COG2813">
    <property type="taxonomic scope" value="Bacteria"/>
</dbReference>
<dbReference type="HOGENOM" id="CLU_040288_4_0_6"/>
<dbReference type="BioCyc" id="PHAL326442:PSHA_RS11075-MONOMER"/>
<dbReference type="Proteomes" id="UP000006843">
    <property type="component" value="Chromosome I"/>
</dbReference>
<dbReference type="GO" id="GO:0005737">
    <property type="term" value="C:cytoplasm"/>
    <property type="evidence" value="ECO:0007669"/>
    <property type="project" value="UniProtKB-SubCell"/>
</dbReference>
<dbReference type="GO" id="GO:0052916">
    <property type="term" value="F:23S rRNA (guanine(1835)-N(2))-methyltransferase activity"/>
    <property type="evidence" value="ECO:0007669"/>
    <property type="project" value="UniProtKB-EC"/>
</dbReference>
<dbReference type="GO" id="GO:0003676">
    <property type="term" value="F:nucleic acid binding"/>
    <property type="evidence" value="ECO:0007669"/>
    <property type="project" value="InterPro"/>
</dbReference>
<dbReference type="CDD" id="cd02440">
    <property type="entry name" value="AdoMet_MTases"/>
    <property type="match status" value="1"/>
</dbReference>
<dbReference type="Gene3D" id="3.40.50.150">
    <property type="entry name" value="Vaccinia Virus protein VP39"/>
    <property type="match status" value="2"/>
</dbReference>
<dbReference type="HAMAP" id="MF_01859">
    <property type="entry name" value="23SrRNA_methyltr_G"/>
    <property type="match status" value="1"/>
</dbReference>
<dbReference type="InterPro" id="IPR002052">
    <property type="entry name" value="DNA_methylase_N6_adenine_CS"/>
</dbReference>
<dbReference type="InterPro" id="IPR017237">
    <property type="entry name" value="rRNA_m2G-MeTrfase_RlmG"/>
</dbReference>
<dbReference type="InterPro" id="IPR046977">
    <property type="entry name" value="RsmC/RlmG"/>
</dbReference>
<dbReference type="InterPro" id="IPR029063">
    <property type="entry name" value="SAM-dependent_MTases_sf"/>
</dbReference>
<dbReference type="InterPro" id="IPR007848">
    <property type="entry name" value="Small_mtfrase_dom"/>
</dbReference>
<dbReference type="PANTHER" id="PTHR47816:SF5">
    <property type="entry name" value="RIBOSOMAL RNA LARGE SUBUNIT METHYLTRANSFERASE G"/>
    <property type="match status" value="1"/>
</dbReference>
<dbReference type="PANTHER" id="PTHR47816">
    <property type="entry name" value="RIBOSOMAL RNA SMALL SUBUNIT METHYLTRANSFERASE C"/>
    <property type="match status" value="1"/>
</dbReference>
<dbReference type="Pfam" id="PF05175">
    <property type="entry name" value="MTS"/>
    <property type="match status" value="1"/>
</dbReference>
<dbReference type="PIRSF" id="PIRSF037565">
    <property type="entry name" value="RRNA_m2G_Mtase_RsmD_prd"/>
    <property type="match status" value="1"/>
</dbReference>
<dbReference type="SUPFAM" id="SSF53335">
    <property type="entry name" value="S-adenosyl-L-methionine-dependent methyltransferases"/>
    <property type="match status" value="2"/>
</dbReference>
<keyword id="KW-0963">Cytoplasm</keyword>
<keyword id="KW-0489">Methyltransferase</keyword>
<keyword id="KW-1185">Reference proteome</keyword>
<keyword id="KW-0698">rRNA processing</keyword>
<keyword id="KW-0949">S-adenosyl-L-methionine</keyword>
<keyword id="KW-0808">Transferase</keyword>
<sequence>MTMQAQLGDKTFTLERFPLDQKNRSLQAWDSADEYLIDYVSEHHPDCRSLLILNDSFGALSCYFSHKQLTVCSVNDSYISHQAAAYNLAENKIPAITFSQLDSLSALPEQVDLVLIKVPRTLGFLQYQLSELSEVLAPGTPVIAAAKTKDVHNSTIKAFEQFIGETKTSLAVKKSRLIISHAQGGYKAADFPVNWPLEGTDFTISNHANVFSRDSLDIGARFFFNYLPETNKAKSIIDLGCGNGVVGLMALSRCPNANITFVDESYMAVESARLNVELNMEAKYEQCSFVENDCLSGFERDSVDMVLCNPPFHQAQAVTDHIAWQMFKEAKDTLKEGGELRIIGNRHLDYHDKLNRMFGNCKLLGSNKKFVVLSATKNTGML</sequence>
<name>RLMG_PSET1</name>